<comment type="function">
    <text evidence="1">One of the primary rRNA binding proteins. Required for association of the 30S and 50S subunits to form the 70S ribosome, for tRNA binding and peptide bond formation. It has been suggested to have peptidyltransferase activity; this is somewhat controversial. Makes several contacts with the 16S rRNA in the 70S ribosome.</text>
</comment>
<comment type="subunit">
    <text evidence="1">Part of the 50S ribosomal subunit. Forms a bridge to the 30S subunit in the 70S ribosome.</text>
</comment>
<comment type="similarity">
    <text evidence="1">Belongs to the universal ribosomal protein uL2 family.</text>
</comment>
<accession>Q9CDW5</accession>
<evidence type="ECO:0000255" key="1">
    <source>
        <dbReference type="HAMAP-Rule" id="MF_01320"/>
    </source>
</evidence>
<evidence type="ECO:0000256" key="2">
    <source>
        <dbReference type="SAM" id="MobiDB-lite"/>
    </source>
</evidence>
<evidence type="ECO:0000305" key="3"/>
<reference key="1">
    <citation type="journal article" date="2001" name="Genome Res.">
        <title>The complete genome sequence of the lactic acid bacterium Lactococcus lactis ssp. lactis IL1403.</title>
        <authorList>
            <person name="Bolotin A."/>
            <person name="Wincker P."/>
            <person name="Mauger S."/>
            <person name="Jaillon O."/>
            <person name="Malarme K."/>
            <person name="Weissenbach J."/>
            <person name="Ehrlich S.D."/>
            <person name="Sorokin A."/>
        </authorList>
    </citation>
    <scope>NUCLEOTIDE SEQUENCE [LARGE SCALE GENOMIC DNA]</scope>
    <source>
        <strain>IL1403</strain>
    </source>
</reference>
<name>RL2_LACLA</name>
<feature type="chain" id="PRO_0000129571" description="Large ribosomal subunit protein uL2">
    <location>
        <begin position="1"/>
        <end position="276"/>
    </location>
</feature>
<feature type="region of interest" description="Disordered" evidence="2">
    <location>
        <begin position="219"/>
        <end position="268"/>
    </location>
</feature>
<organism>
    <name type="scientific">Lactococcus lactis subsp. lactis (strain IL1403)</name>
    <name type="common">Streptococcus lactis</name>
    <dbReference type="NCBI Taxonomy" id="272623"/>
    <lineage>
        <taxon>Bacteria</taxon>
        <taxon>Bacillati</taxon>
        <taxon>Bacillota</taxon>
        <taxon>Bacilli</taxon>
        <taxon>Lactobacillales</taxon>
        <taxon>Streptococcaceae</taxon>
        <taxon>Lactococcus</taxon>
    </lineage>
</organism>
<sequence>MGIKVYKPTTNGRRNMTGSDFAEITTSTPEKSLLVSMSKTAGRNNTGRITVRHHGGGHKRKYRVIDFKRTTDNVVAKVATIEYDPNRTANIALIVYSNGVKSYILAPKGLEVGMTVVSGPEADIKVGNALPLANIPVGTLIHNIELKPGKGGQLVRSAGASAQVLGSEGKYTLVRLQSGEVRMILSTCRATIGVVGNEQQSLINLGKAGRTRHMGIRPTVRGSVMNPNDHPHGGGEGRQPVGRKSPMTPWGKPALGLKTRNKKAKSSKLIVRRIND</sequence>
<protein>
    <recommendedName>
        <fullName evidence="1">Large ribosomal subunit protein uL2</fullName>
    </recommendedName>
    <alternativeName>
        <fullName evidence="3">50S ribosomal protein L2</fullName>
    </alternativeName>
</protein>
<dbReference type="EMBL" id="AE005176">
    <property type="protein sequence ID" value="AAK06194.1"/>
    <property type="molecule type" value="Genomic_DNA"/>
</dbReference>
<dbReference type="PIR" id="H86886">
    <property type="entry name" value="H86886"/>
</dbReference>
<dbReference type="RefSeq" id="NP_268253.1">
    <property type="nucleotide sequence ID" value="NC_002662.1"/>
</dbReference>
<dbReference type="RefSeq" id="WP_003129965.1">
    <property type="nucleotide sequence ID" value="NC_002662.1"/>
</dbReference>
<dbReference type="SMR" id="Q9CDW5"/>
<dbReference type="PaxDb" id="272623-L0400"/>
<dbReference type="EnsemblBacteria" id="AAK06194">
    <property type="protein sequence ID" value="AAK06194"/>
    <property type="gene ID" value="L0400"/>
</dbReference>
<dbReference type="GeneID" id="89634443"/>
<dbReference type="KEGG" id="lla:L0400"/>
<dbReference type="PATRIC" id="fig|272623.7.peg.2255"/>
<dbReference type="eggNOG" id="COG0090">
    <property type="taxonomic scope" value="Bacteria"/>
</dbReference>
<dbReference type="HOGENOM" id="CLU_036235_2_1_9"/>
<dbReference type="OrthoDB" id="9778722at2"/>
<dbReference type="Proteomes" id="UP000002196">
    <property type="component" value="Chromosome"/>
</dbReference>
<dbReference type="GO" id="GO:0015934">
    <property type="term" value="C:large ribosomal subunit"/>
    <property type="evidence" value="ECO:0007669"/>
    <property type="project" value="InterPro"/>
</dbReference>
<dbReference type="GO" id="GO:0019843">
    <property type="term" value="F:rRNA binding"/>
    <property type="evidence" value="ECO:0007669"/>
    <property type="project" value="UniProtKB-UniRule"/>
</dbReference>
<dbReference type="GO" id="GO:0003735">
    <property type="term" value="F:structural constituent of ribosome"/>
    <property type="evidence" value="ECO:0007669"/>
    <property type="project" value="InterPro"/>
</dbReference>
<dbReference type="GO" id="GO:0016740">
    <property type="term" value="F:transferase activity"/>
    <property type="evidence" value="ECO:0007669"/>
    <property type="project" value="InterPro"/>
</dbReference>
<dbReference type="GO" id="GO:0002181">
    <property type="term" value="P:cytoplasmic translation"/>
    <property type="evidence" value="ECO:0007669"/>
    <property type="project" value="TreeGrafter"/>
</dbReference>
<dbReference type="FunFam" id="2.30.30.30:FF:000001">
    <property type="entry name" value="50S ribosomal protein L2"/>
    <property type="match status" value="1"/>
</dbReference>
<dbReference type="FunFam" id="2.40.50.140:FF:000003">
    <property type="entry name" value="50S ribosomal protein L2"/>
    <property type="match status" value="1"/>
</dbReference>
<dbReference type="FunFam" id="4.10.950.10:FF:000001">
    <property type="entry name" value="50S ribosomal protein L2"/>
    <property type="match status" value="1"/>
</dbReference>
<dbReference type="Gene3D" id="2.30.30.30">
    <property type="match status" value="1"/>
</dbReference>
<dbReference type="Gene3D" id="2.40.50.140">
    <property type="entry name" value="Nucleic acid-binding proteins"/>
    <property type="match status" value="1"/>
</dbReference>
<dbReference type="Gene3D" id="4.10.950.10">
    <property type="entry name" value="Ribosomal protein L2, domain 3"/>
    <property type="match status" value="1"/>
</dbReference>
<dbReference type="HAMAP" id="MF_01320_B">
    <property type="entry name" value="Ribosomal_uL2_B"/>
    <property type="match status" value="1"/>
</dbReference>
<dbReference type="InterPro" id="IPR012340">
    <property type="entry name" value="NA-bd_OB-fold"/>
</dbReference>
<dbReference type="InterPro" id="IPR014722">
    <property type="entry name" value="Rib_uL2_dom2"/>
</dbReference>
<dbReference type="InterPro" id="IPR002171">
    <property type="entry name" value="Ribosomal_uL2"/>
</dbReference>
<dbReference type="InterPro" id="IPR005880">
    <property type="entry name" value="Ribosomal_uL2_bac/org-type"/>
</dbReference>
<dbReference type="InterPro" id="IPR022669">
    <property type="entry name" value="Ribosomal_uL2_C"/>
</dbReference>
<dbReference type="InterPro" id="IPR022671">
    <property type="entry name" value="Ribosomal_uL2_CS"/>
</dbReference>
<dbReference type="InterPro" id="IPR014726">
    <property type="entry name" value="Ribosomal_uL2_dom3"/>
</dbReference>
<dbReference type="InterPro" id="IPR022666">
    <property type="entry name" value="Ribosomal_uL2_RNA-bd_dom"/>
</dbReference>
<dbReference type="InterPro" id="IPR008991">
    <property type="entry name" value="Translation_prot_SH3-like_sf"/>
</dbReference>
<dbReference type="NCBIfam" id="TIGR01171">
    <property type="entry name" value="rplB_bact"/>
    <property type="match status" value="1"/>
</dbReference>
<dbReference type="PANTHER" id="PTHR13691:SF5">
    <property type="entry name" value="LARGE RIBOSOMAL SUBUNIT PROTEIN UL2M"/>
    <property type="match status" value="1"/>
</dbReference>
<dbReference type="PANTHER" id="PTHR13691">
    <property type="entry name" value="RIBOSOMAL PROTEIN L2"/>
    <property type="match status" value="1"/>
</dbReference>
<dbReference type="Pfam" id="PF00181">
    <property type="entry name" value="Ribosomal_L2"/>
    <property type="match status" value="1"/>
</dbReference>
<dbReference type="Pfam" id="PF03947">
    <property type="entry name" value="Ribosomal_L2_C"/>
    <property type="match status" value="1"/>
</dbReference>
<dbReference type="PIRSF" id="PIRSF002158">
    <property type="entry name" value="Ribosomal_L2"/>
    <property type="match status" value="1"/>
</dbReference>
<dbReference type="SMART" id="SM01383">
    <property type="entry name" value="Ribosomal_L2"/>
    <property type="match status" value="1"/>
</dbReference>
<dbReference type="SMART" id="SM01382">
    <property type="entry name" value="Ribosomal_L2_C"/>
    <property type="match status" value="1"/>
</dbReference>
<dbReference type="SUPFAM" id="SSF50249">
    <property type="entry name" value="Nucleic acid-binding proteins"/>
    <property type="match status" value="1"/>
</dbReference>
<dbReference type="SUPFAM" id="SSF50104">
    <property type="entry name" value="Translation proteins SH3-like domain"/>
    <property type="match status" value="1"/>
</dbReference>
<dbReference type="PROSITE" id="PS00467">
    <property type="entry name" value="RIBOSOMAL_L2"/>
    <property type="match status" value="1"/>
</dbReference>
<gene>
    <name evidence="1" type="primary">rplB</name>
    <name type="ordered locus">LL2096</name>
    <name type="ORF">L0400</name>
</gene>
<keyword id="KW-1185">Reference proteome</keyword>
<keyword id="KW-0687">Ribonucleoprotein</keyword>
<keyword id="KW-0689">Ribosomal protein</keyword>
<keyword id="KW-0694">RNA-binding</keyword>
<keyword id="KW-0699">rRNA-binding</keyword>
<proteinExistence type="inferred from homology"/>